<reference key="1">
    <citation type="journal article" date="2006" name="J. Bacteriol.">
        <title>Complete genome sequence of Yersinia pestis strains Antiqua and Nepal516: evidence of gene reduction in an emerging pathogen.</title>
        <authorList>
            <person name="Chain P.S.G."/>
            <person name="Hu P."/>
            <person name="Malfatti S.A."/>
            <person name="Radnedge L."/>
            <person name="Larimer F."/>
            <person name="Vergez L.M."/>
            <person name="Worsham P."/>
            <person name="Chu M.C."/>
            <person name="Andersen G.L."/>
        </authorList>
    </citation>
    <scope>NUCLEOTIDE SEQUENCE [LARGE SCALE GENOMIC DNA]</scope>
    <source>
        <strain>Antiqua</strain>
    </source>
</reference>
<feature type="chain" id="PRO_0000343982" description="Cell division inhibitor SulA">
    <location>
        <begin position="1"/>
        <end position="168"/>
    </location>
</feature>
<feature type="region of interest" description="FtsZ binding" evidence="1">
    <location>
        <begin position="106"/>
        <end position="112"/>
    </location>
</feature>
<feature type="region of interest" description="Lon protease binding" evidence="1">
    <location>
        <begin position="161"/>
        <end position="168"/>
    </location>
</feature>
<feature type="site" description="Essential for degradation by Lon protease" evidence="1">
    <location>
        <position position="168"/>
    </location>
</feature>
<evidence type="ECO:0000255" key="1">
    <source>
        <dbReference type="HAMAP-Rule" id="MF_01179"/>
    </source>
</evidence>
<keyword id="KW-0131">Cell cycle</keyword>
<keyword id="KW-0132">Cell division</keyword>
<keyword id="KW-0227">DNA damage</keyword>
<keyword id="KW-0717">Septation</keyword>
<keyword id="KW-0742">SOS response</keyword>
<dbReference type="EMBL" id="CP000308">
    <property type="protein sequence ID" value="ABG12696.1"/>
    <property type="molecule type" value="Genomic_DNA"/>
</dbReference>
<dbReference type="RefSeq" id="WP_002213065.1">
    <property type="nucleotide sequence ID" value="NZ_CP009906.1"/>
</dbReference>
<dbReference type="SMR" id="Q1CA26"/>
<dbReference type="GeneID" id="57977127"/>
<dbReference type="KEGG" id="ypa:YPA_0728"/>
<dbReference type="Proteomes" id="UP000001971">
    <property type="component" value="Chromosome"/>
</dbReference>
<dbReference type="GO" id="GO:0000917">
    <property type="term" value="P:division septum assembly"/>
    <property type="evidence" value="ECO:0007669"/>
    <property type="project" value="UniProtKB-KW"/>
</dbReference>
<dbReference type="GO" id="GO:0006281">
    <property type="term" value="P:DNA repair"/>
    <property type="evidence" value="ECO:0007669"/>
    <property type="project" value="TreeGrafter"/>
</dbReference>
<dbReference type="GO" id="GO:0051782">
    <property type="term" value="P:negative regulation of cell division"/>
    <property type="evidence" value="ECO:0007669"/>
    <property type="project" value="UniProtKB-UniRule"/>
</dbReference>
<dbReference type="GO" id="GO:0009432">
    <property type="term" value="P:SOS response"/>
    <property type="evidence" value="ECO:0007669"/>
    <property type="project" value="UniProtKB-UniRule"/>
</dbReference>
<dbReference type="FunFam" id="3.40.50.300:FF:000417">
    <property type="entry name" value="Cell division inhibitor SulA"/>
    <property type="match status" value="1"/>
</dbReference>
<dbReference type="Gene3D" id="3.40.50.300">
    <property type="entry name" value="P-loop containing nucleotide triphosphate hydrolases"/>
    <property type="match status" value="1"/>
</dbReference>
<dbReference type="HAMAP" id="MF_01179">
    <property type="entry name" value="SulA"/>
    <property type="match status" value="1"/>
</dbReference>
<dbReference type="InterPro" id="IPR004596">
    <property type="entry name" value="Cell_div_suppressor_SulA"/>
</dbReference>
<dbReference type="InterPro" id="IPR027417">
    <property type="entry name" value="P-loop_NTPase"/>
</dbReference>
<dbReference type="InterPro" id="IPR050356">
    <property type="entry name" value="SulA_CellDiv_inhibitor"/>
</dbReference>
<dbReference type="InterPro" id="IPR047696">
    <property type="entry name" value="SulA_enterobact"/>
</dbReference>
<dbReference type="NCBIfam" id="NF007892">
    <property type="entry name" value="PRK10595.1"/>
    <property type="match status" value="1"/>
</dbReference>
<dbReference type="NCBIfam" id="TIGR00623">
    <property type="entry name" value="SOS_SulA_coli"/>
    <property type="match status" value="1"/>
</dbReference>
<dbReference type="PANTHER" id="PTHR35369">
    <property type="entry name" value="BLR3025 PROTEIN-RELATED"/>
    <property type="match status" value="1"/>
</dbReference>
<dbReference type="PANTHER" id="PTHR35369:SF4">
    <property type="entry name" value="CELL DIVISION INHIBITOR SULA"/>
    <property type="match status" value="1"/>
</dbReference>
<dbReference type="Pfam" id="PF03846">
    <property type="entry name" value="SulA"/>
    <property type="match status" value="1"/>
</dbReference>
<dbReference type="PIRSF" id="PIRSF003093">
    <property type="entry name" value="SulA"/>
    <property type="match status" value="1"/>
</dbReference>
<dbReference type="SUPFAM" id="SSF52540">
    <property type="entry name" value="P-loop containing nucleoside triphosphate hydrolases"/>
    <property type="match status" value="1"/>
</dbReference>
<name>SULA_YERPA</name>
<organism>
    <name type="scientific">Yersinia pestis bv. Antiqua (strain Antiqua)</name>
    <dbReference type="NCBI Taxonomy" id="360102"/>
    <lineage>
        <taxon>Bacteria</taxon>
        <taxon>Pseudomonadati</taxon>
        <taxon>Pseudomonadota</taxon>
        <taxon>Gammaproteobacteria</taxon>
        <taxon>Enterobacterales</taxon>
        <taxon>Yersiniaceae</taxon>
        <taxon>Yersinia</taxon>
    </lineage>
</organism>
<accession>Q1CA26</accession>
<sequence length="168" mass="19060">MRTQSLKPYHANYHSLTTNDSPTRVDAPTDSGLISEFVYSENQPVVTQLLLPLLQQLSKQSRWLLWLTPQQKLSRSWLKQSGLPINKVVQLRQINPLSTVEAMEKALLTGNYSVVLGWLPELTEDDRIRLRLAAKLGNAYGFVMRPLNDTKVGSGQCATLKIHSYLYH</sequence>
<comment type="function">
    <text evidence="1">Component of the SOS system and an inhibitor of cell division. Accumulation of SulA causes rapid cessation of cell division and the appearance of long, non-septate filaments. In the presence of GTP, binds a polymerization-competent form of FtsZ in a 1:1 ratio, thus inhibiting FtsZ polymerization and therefore preventing it from participating in the assembly of the Z ring. This mechanism prevents the premature segregation of damaged DNA to daughter cells during cell division.</text>
</comment>
<comment type="subunit">
    <text evidence="1">Interacts with FtsZ.</text>
</comment>
<comment type="induction">
    <text evidence="1">By DNA damage, as part of the SOS response.</text>
</comment>
<comment type="PTM">
    <text evidence="1">Is rapidly cleaved and degraded by the Lon protease once DNA damage is repaired.</text>
</comment>
<comment type="similarity">
    <text evidence="1">Belongs to the SulA family.</text>
</comment>
<proteinExistence type="inferred from homology"/>
<gene>
    <name evidence="1" type="primary">sulA</name>
    <name type="ordered locus">YPA_0728</name>
</gene>
<protein>
    <recommendedName>
        <fullName evidence="1">Cell division inhibitor SulA</fullName>
    </recommendedName>
</protein>